<keyword id="KW-0150">Chloroplast</keyword>
<keyword id="KW-0240">DNA-directed RNA polymerase</keyword>
<keyword id="KW-0479">Metal-binding</keyword>
<keyword id="KW-0548">Nucleotidyltransferase</keyword>
<keyword id="KW-0934">Plastid</keyword>
<keyword id="KW-0804">Transcription</keyword>
<keyword id="KW-0808">Transferase</keyword>
<keyword id="KW-0862">Zinc</keyword>
<dbReference type="EC" id="2.7.7.6" evidence="1"/>
<dbReference type="EMBL" id="AB189069">
    <property type="protein sequence ID" value="BAD93459.1"/>
    <property type="molecule type" value="Genomic_DNA"/>
</dbReference>
<dbReference type="SMR" id="Q589B8"/>
<dbReference type="GO" id="GO:0009507">
    <property type="term" value="C:chloroplast"/>
    <property type="evidence" value="ECO:0007669"/>
    <property type="project" value="UniProtKB-SubCell"/>
</dbReference>
<dbReference type="GO" id="GO:0000428">
    <property type="term" value="C:DNA-directed RNA polymerase complex"/>
    <property type="evidence" value="ECO:0007669"/>
    <property type="project" value="UniProtKB-KW"/>
</dbReference>
<dbReference type="GO" id="GO:0005739">
    <property type="term" value="C:mitochondrion"/>
    <property type="evidence" value="ECO:0007669"/>
    <property type="project" value="GOC"/>
</dbReference>
<dbReference type="GO" id="GO:0003677">
    <property type="term" value="F:DNA binding"/>
    <property type="evidence" value="ECO:0007669"/>
    <property type="project" value="UniProtKB-UniRule"/>
</dbReference>
<dbReference type="GO" id="GO:0003899">
    <property type="term" value="F:DNA-directed RNA polymerase activity"/>
    <property type="evidence" value="ECO:0007669"/>
    <property type="project" value="UniProtKB-UniRule"/>
</dbReference>
<dbReference type="GO" id="GO:0008270">
    <property type="term" value="F:zinc ion binding"/>
    <property type="evidence" value="ECO:0007669"/>
    <property type="project" value="UniProtKB-UniRule"/>
</dbReference>
<dbReference type="GO" id="GO:0006351">
    <property type="term" value="P:DNA-templated transcription"/>
    <property type="evidence" value="ECO:0007669"/>
    <property type="project" value="UniProtKB-UniRule"/>
</dbReference>
<dbReference type="CDD" id="cd02655">
    <property type="entry name" value="RNAP_beta'_C"/>
    <property type="match status" value="1"/>
</dbReference>
<dbReference type="FunFam" id="1.10.132.30:FF:000002">
    <property type="entry name" value="DNA-directed RNA polymerase subunit beta"/>
    <property type="match status" value="1"/>
</dbReference>
<dbReference type="Gene3D" id="1.10.132.30">
    <property type="match status" value="1"/>
</dbReference>
<dbReference type="Gene3D" id="1.10.150.390">
    <property type="match status" value="1"/>
</dbReference>
<dbReference type="Gene3D" id="1.10.1790.20">
    <property type="match status" value="1"/>
</dbReference>
<dbReference type="Gene3D" id="1.10.274.100">
    <property type="entry name" value="RNA polymerase Rpb1, domain 3"/>
    <property type="match status" value="1"/>
</dbReference>
<dbReference type="HAMAP" id="MF_01324">
    <property type="entry name" value="RNApol_bact_RpoC2"/>
    <property type="match status" value="1"/>
</dbReference>
<dbReference type="InterPro" id="IPR012756">
    <property type="entry name" value="DNA-dir_RpoC2_beta_pp"/>
</dbReference>
<dbReference type="InterPro" id="IPR050254">
    <property type="entry name" value="RNA_pol_beta''_euk"/>
</dbReference>
<dbReference type="InterPro" id="IPR042102">
    <property type="entry name" value="RNA_pol_Rpb1_3_sf"/>
</dbReference>
<dbReference type="InterPro" id="IPR007083">
    <property type="entry name" value="RNA_pol_Rpb1_4"/>
</dbReference>
<dbReference type="InterPro" id="IPR007081">
    <property type="entry name" value="RNA_pol_Rpb1_5"/>
</dbReference>
<dbReference type="InterPro" id="IPR038120">
    <property type="entry name" value="Rpb1_funnel_sf"/>
</dbReference>
<dbReference type="NCBIfam" id="TIGR02388">
    <property type="entry name" value="rpoC2_cyan"/>
    <property type="match status" value="1"/>
</dbReference>
<dbReference type="PANTHER" id="PTHR34995">
    <property type="entry name" value="DNA-DIRECTED RNA POLYMERASE SUBUNIT BETA"/>
    <property type="match status" value="1"/>
</dbReference>
<dbReference type="PANTHER" id="PTHR34995:SF1">
    <property type="entry name" value="DNA-DIRECTED RNA POLYMERASE SUBUNIT BETA"/>
    <property type="match status" value="1"/>
</dbReference>
<dbReference type="Pfam" id="PF05000">
    <property type="entry name" value="RNA_pol_Rpb1_4"/>
    <property type="match status" value="1"/>
</dbReference>
<dbReference type="Pfam" id="PF04998">
    <property type="entry name" value="RNA_pol_Rpb1_5"/>
    <property type="match status" value="2"/>
</dbReference>
<dbReference type="SUPFAM" id="SSF64484">
    <property type="entry name" value="beta and beta-prime subunits of DNA dependent RNA-polymerase"/>
    <property type="match status" value="1"/>
</dbReference>
<comment type="function">
    <text evidence="1">DNA-dependent RNA polymerase catalyzes the transcription of DNA into RNA using the four ribonucleoside triphosphates as substrates.</text>
</comment>
<comment type="catalytic activity">
    <reaction evidence="1">
        <text>RNA(n) + a ribonucleoside 5'-triphosphate = RNA(n+1) + diphosphate</text>
        <dbReference type="Rhea" id="RHEA:21248"/>
        <dbReference type="Rhea" id="RHEA-COMP:14527"/>
        <dbReference type="Rhea" id="RHEA-COMP:17342"/>
        <dbReference type="ChEBI" id="CHEBI:33019"/>
        <dbReference type="ChEBI" id="CHEBI:61557"/>
        <dbReference type="ChEBI" id="CHEBI:140395"/>
        <dbReference type="EC" id="2.7.7.6"/>
    </reaction>
</comment>
<comment type="cofactor">
    <cofactor evidence="1">
        <name>Zn(2+)</name>
        <dbReference type="ChEBI" id="CHEBI:29105"/>
    </cofactor>
    <text evidence="1">Binds 1 Zn(2+) ion per subunit.</text>
</comment>
<comment type="subunit">
    <text evidence="1">In plastids the minimal PEP RNA polymerase catalytic core is composed of four subunits: alpha, beta, beta', and beta''. When a (nuclear-encoded) sigma factor is associated with the core the holoenzyme is formed, which can initiate transcription.</text>
</comment>
<comment type="subcellular location">
    <subcellularLocation>
        <location evidence="1">Plastid</location>
        <location evidence="1">Chloroplast</location>
    </subcellularLocation>
</comment>
<comment type="similarity">
    <text evidence="1">Belongs to the RNA polymerase beta' chain family. RpoC2 subfamily.</text>
</comment>
<organism>
    <name type="scientific">Silene latifolia</name>
    <name type="common">White campion</name>
    <name type="synonym">Bladder campion</name>
    <dbReference type="NCBI Taxonomy" id="37657"/>
    <lineage>
        <taxon>Eukaryota</taxon>
        <taxon>Viridiplantae</taxon>
        <taxon>Streptophyta</taxon>
        <taxon>Embryophyta</taxon>
        <taxon>Tracheophyta</taxon>
        <taxon>Spermatophyta</taxon>
        <taxon>Magnoliopsida</taxon>
        <taxon>eudicotyledons</taxon>
        <taxon>Gunneridae</taxon>
        <taxon>Pentapetalae</taxon>
        <taxon>Caryophyllales</taxon>
        <taxon>Caryophyllaceae</taxon>
        <taxon>Sileneae</taxon>
        <taxon>Silene</taxon>
        <taxon>Silene subgen. Behenantha</taxon>
        <taxon>Silene sect. Melandrium</taxon>
    </lineage>
</organism>
<feature type="chain" id="PRO_0000067947" description="DNA-directed RNA polymerase subunit beta''">
    <location>
        <begin position="1"/>
        <end position="1373"/>
    </location>
</feature>
<feature type="binding site" evidence="1">
    <location>
        <position position="220"/>
    </location>
    <ligand>
        <name>Zn(2+)</name>
        <dbReference type="ChEBI" id="CHEBI:29105"/>
    </ligand>
</feature>
<feature type="binding site" evidence="1">
    <location>
        <position position="291"/>
    </location>
    <ligand>
        <name>Zn(2+)</name>
        <dbReference type="ChEBI" id="CHEBI:29105"/>
    </ligand>
</feature>
<feature type="binding site" evidence="1">
    <location>
        <position position="298"/>
    </location>
    <ligand>
        <name>Zn(2+)</name>
        <dbReference type="ChEBI" id="CHEBI:29105"/>
    </ligand>
</feature>
<feature type="binding site" evidence="1">
    <location>
        <position position="301"/>
    </location>
    <ligand>
        <name>Zn(2+)</name>
        <dbReference type="ChEBI" id="CHEBI:29105"/>
    </ligand>
</feature>
<gene>
    <name evidence="1" type="primary">rpoC2</name>
</gene>
<proteinExistence type="inferred from homology"/>
<geneLocation type="chloroplast"/>
<protein>
    <recommendedName>
        <fullName evidence="1">DNA-directed RNA polymerase subunit beta''</fullName>
        <ecNumber evidence="1">2.7.7.6</ecNumber>
    </recommendedName>
    <alternativeName>
        <fullName evidence="1">PEP</fullName>
    </alternativeName>
    <alternativeName>
        <fullName evidence="1">Plastid-encoded RNA polymerase subunit beta''</fullName>
        <shortName evidence="1">RNA polymerase subunit beta''</shortName>
    </alternativeName>
</protein>
<reference key="1">
    <citation type="submission" date="2004-08" db="EMBL/GenBank/DDBJ databases">
        <title>A partial chloroplast genome of Silene latifolia.</title>
        <authorList>
            <person name="Kejnovsky E."/>
            <person name="Kubat Z."/>
            <person name="Hobza R."/>
            <person name="Lengerova M."/>
            <person name="Sato S."/>
            <person name="Tabata S."/>
            <person name="Fukui K."/>
            <person name="Matsunaga S."/>
            <person name="Vyskot B."/>
        </authorList>
    </citation>
    <scope>NUCLEOTIDE SEQUENCE [GENOMIC DNA]</scope>
</reference>
<accession>Q589B8</accession>
<sequence length="1373" mass="156521">MAERANLVFHNKSIDGTAMKRLISRLIDHFGMAYTAHILDQVKTLGFQQATATSISLGIDDLLTIPSKGWLVQDAEQQSLILEKHHHYGNVHAVEKLRQSIEIWYSTSEYLRQEMNPNFRMTDPYNPVHIMSFSGARGNVSQVHQLVGMRGLMSDPQGQMIDLPIQSNLREGLSLTEYIISCYGARKGVVDTAVRTSDAGYLTRRLVEVVQHIVVRRTDCGTIRGISVSPRNGRMPERIFTQILIGRVLADDIYLGSRCIATRNQDIGVGLVNRFITFRTQPIAIRTPFTCRSTSWICRLCYGRSPTHGDLVELGEAVGIIAGQSIGEPGTQLTLRTFHTGGVFTGGTAEHVRAPYNGKIKFNEGLVHPTRTRHGHPAFLCYIDLYVTIESEDSLHNVNIPPKSFLLVQNDQYVESEQVIAEIRAGASTLNFKEKVRKHIYSDSEGEMHWSTDVYHAPEFTYGNVHLLPKASRLWILSGRPYRSSVVSFSLHKDQDQTTGNSLSFEQKIYNLSMTNDQVQNKFLDPYIKKSSKKEDRSPNYSELNGMSHCNHIYPAKNSDLLAKRRKNRLIIPFQFQLSQEREKELMSLSNGISIEIPINGIFRRNSIFAYFNDPRYRTKSSGITKYETIETHSSVKKEDLIEYRGVKEFRPKYQMKVDRFFFISQEVHILPGSSSIMVRNNSIIGVDTQITLNTRSRVGGVVRVERKKKKIELKIFSGDIYFPGETDKISRHSGILIPPGKTNYKESKNIKNWLYVQRITPTKKKYFVLVRPVVTYEITDGINLATLLPQDLLQERGNVQLRVFNYILYGNGKVTRGIYDTSIQLVRTCLVLNWNQDKKDSSIEEARASFVEVRTNGIIRYFLKIGLMNRALSYIGKRNNPPLFSDDGLEYTNMNPFFSIYSKPKLQQAFNPNQGTVRMLVGKNKECQSFIILSSSNCFRMGPFTLNGVKYPKESIKKDRLILIKNSFGPLGTVLNFVNFFFFYHLITHNQILVNNYLQLDNLKQTCQVLKYQYYLMDENGIIYNPDFCSNIILNPFNLHWDFLHYNFCDETSTKMRLGQFICENICIKKNGLHLKPGQIIIVQFDSVVIRSAKPCLATPGATVHGHYGEIIYEGDTLVTFIYEKSRSGDITQGLPKVEQVLEVRSVESISMNLEKRINGWNERIKKILGIPWGFLVGAELTIAQSRISLVNKIQKVYRSQGVQIHDRHIEIIVRQITSKVLVSEDGMSNIFLPGELIGLFRAERTGRALEEAICYRTILLGITRASLNTQSFISEASFQETARVLAKAALRGRIDWLKGLKENVVLGGMIPVGTGFKGFVHRSNQHKSISIPLKIKNKNRLEGEMRDILFYHRELLDSCFLKNLGDRSKQQ</sequence>
<name>RPOC2_SILLA</name>
<evidence type="ECO:0000255" key="1">
    <source>
        <dbReference type="HAMAP-Rule" id="MF_01324"/>
    </source>
</evidence>